<name>YCR4_PSEVU</name>
<sequence length="103" mass="11161">MALRSLGTTGLHIPPLVFGGNVFGWTVDEQQSFSLLDALLERGLNAIDTADVYSAWAPGNKGGESETILGKWFAAHPGAREKITLFTKVGSDLKAQRLMLRTM</sequence>
<feature type="chain" id="PRO_0000066179" description="Uncharacterized 11.2 kDa protein in crtE 3'region">
    <location>
        <begin position="1"/>
        <end position="103"/>
    </location>
</feature>
<accession>Q01333</accession>
<reference key="1">
    <citation type="journal article" date="1994" name="Mol. Gen. Genet.">
        <title>Functional assignment of Erwinia herbicola Eho10 carotenoid genes expressed in Escherichia coli.</title>
        <authorList>
            <person name="Hundle B."/>
            <person name="Alberti M."/>
            <person name="Nievelstein V."/>
            <person name="Beyer P."/>
            <person name="Kleinig H."/>
            <person name="Armstrong G.A."/>
            <person name="Burke D.H."/>
            <person name="Hearst J.E."/>
        </authorList>
    </citation>
    <scope>NUCLEOTIDE SEQUENCE [GENOMIC DNA]</scope>
    <source>
        <strain>ATCC 39368 / Eho10</strain>
    </source>
</reference>
<protein>
    <recommendedName>
        <fullName>Uncharacterized 11.2 kDa protein in crtE 3'region</fullName>
    </recommendedName>
    <alternativeName>
        <fullName>ORF4</fullName>
    </alternativeName>
</protein>
<proteinExistence type="predicted"/>
<dbReference type="EMBL" id="M87280">
    <property type="protein sequence ID" value="AAA64976.1"/>
    <property type="molecule type" value="Genomic_DNA"/>
</dbReference>
<dbReference type="PIR" id="S52978">
    <property type="entry name" value="S52978"/>
</dbReference>
<dbReference type="SMR" id="Q01333"/>
<dbReference type="GO" id="GO:0005829">
    <property type="term" value="C:cytosol"/>
    <property type="evidence" value="ECO:0007669"/>
    <property type="project" value="TreeGrafter"/>
</dbReference>
<dbReference type="Gene3D" id="3.20.20.100">
    <property type="entry name" value="NADP-dependent oxidoreductase domain"/>
    <property type="match status" value="1"/>
</dbReference>
<dbReference type="InterPro" id="IPR050523">
    <property type="entry name" value="AKR_Detox_Biosynth"/>
</dbReference>
<dbReference type="InterPro" id="IPR023210">
    <property type="entry name" value="NADP_OxRdtase_dom"/>
</dbReference>
<dbReference type="InterPro" id="IPR036812">
    <property type="entry name" value="NADP_OxRdtase_dom_sf"/>
</dbReference>
<dbReference type="PANTHER" id="PTHR43364">
    <property type="entry name" value="NADH-SPECIFIC METHYLGLYOXAL REDUCTASE-RELATED"/>
    <property type="match status" value="1"/>
</dbReference>
<dbReference type="PANTHER" id="PTHR43364:SF6">
    <property type="entry name" value="OXIDOREDUCTASE-RELATED"/>
    <property type="match status" value="1"/>
</dbReference>
<dbReference type="Pfam" id="PF00248">
    <property type="entry name" value="Aldo_ket_red"/>
    <property type="match status" value="1"/>
</dbReference>
<dbReference type="SUPFAM" id="SSF51430">
    <property type="entry name" value="NAD(P)-linked oxidoreductase"/>
    <property type="match status" value="1"/>
</dbReference>
<organism>
    <name type="scientific">Pseudescherichia vulneris</name>
    <name type="common">Escherichia vulneris</name>
    <dbReference type="NCBI Taxonomy" id="566"/>
    <lineage>
        <taxon>Bacteria</taxon>
        <taxon>Pseudomonadati</taxon>
        <taxon>Pseudomonadota</taxon>
        <taxon>Gammaproteobacteria</taxon>
        <taxon>Enterobacterales</taxon>
        <taxon>Enterobacteriaceae</taxon>
        <taxon>Pseudescherichia</taxon>
    </lineage>
</organism>